<organism>
    <name type="scientific">Brucella abortus (strain 2308)</name>
    <dbReference type="NCBI Taxonomy" id="359391"/>
    <lineage>
        <taxon>Bacteria</taxon>
        <taxon>Pseudomonadati</taxon>
        <taxon>Pseudomonadota</taxon>
        <taxon>Alphaproteobacteria</taxon>
        <taxon>Hyphomicrobiales</taxon>
        <taxon>Brucellaceae</taxon>
        <taxon>Brucella/Ochrobactrum group</taxon>
        <taxon>Brucella</taxon>
    </lineage>
</organism>
<dbReference type="EMBL" id="AM040264">
    <property type="protein sequence ID" value="CAJ11715.1"/>
    <property type="molecule type" value="Genomic_DNA"/>
</dbReference>
<dbReference type="SMR" id="Q2YRY7"/>
<dbReference type="STRING" id="359391.BAB1_1759"/>
<dbReference type="KEGG" id="bmf:BAB1_1759"/>
<dbReference type="HOGENOM" id="CLU_135723_3_2_5"/>
<dbReference type="Proteomes" id="UP000002719">
    <property type="component" value="Chromosome I"/>
</dbReference>
<dbReference type="GO" id="GO:1990904">
    <property type="term" value="C:ribonucleoprotein complex"/>
    <property type="evidence" value="ECO:0007669"/>
    <property type="project" value="UniProtKB-KW"/>
</dbReference>
<dbReference type="GO" id="GO:0005840">
    <property type="term" value="C:ribosome"/>
    <property type="evidence" value="ECO:0007669"/>
    <property type="project" value="UniProtKB-KW"/>
</dbReference>
<dbReference type="GO" id="GO:0003735">
    <property type="term" value="F:structural constituent of ribosome"/>
    <property type="evidence" value="ECO:0007669"/>
    <property type="project" value="InterPro"/>
</dbReference>
<dbReference type="GO" id="GO:0006412">
    <property type="term" value="P:translation"/>
    <property type="evidence" value="ECO:0007669"/>
    <property type="project" value="UniProtKB-UniRule"/>
</dbReference>
<dbReference type="HAMAP" id="MF_00251">
    <property type="entry name" value="Ribosomal_bL36"/>
    <property type="match status" value="1"/>
</dbReference>
<dbReference type="InterPro" id="IPR000473">
    <property type="entry name" value="Ribosomal_bL36"/>
</dbReference>
<dbReference type="InterPro" id="IPR035977">
    <property type="entry name" value="Ribosomal_bL36_sp"/>
</dbReference>
<dbReference type="InterPro" id="IPR047621">
    <property type="entry name" value="Ribosomal_L36_bact"/>
</dbReference>
<dbReference type="NCBIfam" id="NF002021">
    <property type="entry name" value="PRK00831.1"/>
    <property type="match status" value="1"/>
</dbReference>
<dbReference type="NCBIfam" id="TIGR01022">
    <property type="entry name" value="rpmJ_bact"/>
    <property type="match status" value="1"/>
</dbReference>
<dbReference type="PANTHER" id="PTHR47781">
    <property type="entry name" value="50S RIBOSOMAL PROTEIN L36 2"/>
    <property type="match status" value="1"/>
</dbReference>
<dbReference type="PANTHER" id="PTHR47781:SF1">
    <property type="entry name" value="LARGE RIBOSOMAL SUBUNIT PROTEIN BL36B"/>
    <property type="match status" value="1"/>
</dbReference>
<dbReference type="Pfam" id="PF00444">
    <property type="entry name" value="Ribosomal_L36"/>
    <property type="match status" value="1"/>
</dbReference>
<dbReference type="SUPFAM" id="SSF57840">
    <property type="entry name" value="Ribosomal protein L36"/>
    <property type="match status" value="1"/>
</dbReference>
<dbReference type="PROSITE" id="PS00828">
    <property type="entry name" value="RIBOSOMAL_L36"/>
    <property type="match status" value="1"/>
</dbReference>
<name>RL36_BRUA2</name>
<sequence length="41" mass="4851">MKIKNSLKALKARHRDCQLVRRKGRVYIINKTAPRFKARQG</sequence>
<comment type="similarity">
    <text evidence="1">Belongs to the bacterial ribosomal protein bL36 family.</text>
</comment>
<protein>
    <recommendedName>
        <fullName evidence="1">Large ribosomal subunit protein bL36</fullName>
    </recommendedName>
    <alternativeName>
        <fullName evidence="2">50S ribosomal protein L36</fullName>
    </alternativeName>
</protein>
<accession>Q2YRY7</accession>
<reference key="1">
    <citation type="journal article" date="2005" name="Infect. Immun.">
        <title>Whole-genome analyses of speciation events in pathogenic Brucellae.</title>
        <authorList>
            <person name="Chain P.S."/>
            <person name="Comerci D.J."/>
            <person name="Tolmasky M.E."/>
            <person name="Larimer F.W."/>
            <person name="Malfatti S.A."/>
            <person name="Vergez L.M."/>
            <person name="Aguero F."/>
            <person name="Land M.L."/>
            <person name="Ugalde R.A."/>
            <person name="Garcia E."/>
        </authorList>
    </citation>
    <scope>NUCLEOTIDE SEQUENCE [LARGE SCALE GENOMIC DNA]</scope>
    <source>
        <strain>2308</strain>
    </source>
</reference>
<feature type="chain" id="PRO_0000302167" description="Large ribosomal subunit protein bL36">
    <location>
        <begin position="1"/>
        <end position="41"/>
    </location>
</feature>
<keyword id="KW-1185">Reference proteome</keyword>
<keyword id="KW-0687">Ribonucleoprotein</keyword>
<keyword id="KW-0689">Ribosomal protein</keyword>
<gene>
    <name evidence="1" type="primary">rpmJ</name>
    <name type="ordered locus">BAB1_1759</name>
</gene>
<proteinExistence type="inferred from homology"/>
<evidence type="ECO:0000255" key="1">
    <source>
        <dbReference type="HAMAP-Rule" id="MF_00251"/>
    </source>
</evidence>
<evidence type="ECO:0000305" key="2"/>